<reference key="1">
    <citation type="submission" date="2005-06" db="EMBL/GenBank/DDBJ databases">
        <title>DNA sequences of macaque genes expressed in brain or testis and its evolutionary implications.</title>
        <authorList>
            <consortium name="International consortium for macaque cDNA sequencing and analysis"/>
        </authorList>
    </citation>
    <scope>NUCLEOTIDE SEQUENCE [LARGE SCALE MRNA]</scope>
    <source>
        <tissue>Testis</tissue>
    </source>
</reference>
<feature type="chain" id="PRO_0000424515" description="Ubiquitin-conjugating enzyme E2 G1">
    <location>
        <begin position="1"/>
        <end position="170"/>
    </location>
</feature>
<feature type="initiator methionine" description="Removed; alternate" evidence="1">
    <location>
        <position position="1"/>
    </location>
</feature>
<feature type="chain" id="PRO_0000281858" description="Ubiquitin-conjugating enzyme E2 G1, N-terminally processed">
    <location>
        <begin position="2"/>
        <end position="170"/>
    </location>
</feature>
<feature type="domain" description="UBC core" evidence="2">
    <location>
        <begin position="5"/>
        <end position="166"/>
    </location>
</feature>
<feature type="active site" description="Glycyl thioester intermediate" evidence="2 3">
    <location>
        <position position="90"/>
    </location>
</feature>
<feature type="modified residue" description="N-acetylmethionine" evidence="1">
    <location>
        <position position="1"/>
    </location>
</feature>
<feature type="modified residue" description="N-acetylthreonine; in Ubiquitin-conjugating enzyme E2 G1, N-terminally processed" evidence="1">
    <location>
        <position position="2"/>
    </location>
</feature>
<gene>
    <name type="primary">UBE2G1</name>
    <name type="ORF">QtsA-19729</name>
</gene>
<proteinExistence type="evidence at transcript level"/>
<protein>
    <recommendedName>
        <fullName>Ubiquitin-conjugating enzyme E2 G1</fullName>
        <ecNumber>2.3.2.23</ecNumber>
    </recommendedName>
    <alternativeName>
        <fullName>E2 ubiquitin-conjugating enzyme G1</fullName>
    </alternativeName>
    <alternativeName>
        <fullName>Ubiquitin carrier protein G1</fullName>
    </alternativeName>
    <alternativeName>
        <fullName>Ubiquitin-protein ligase G1</fullName>
    </alternativeName>
    <component>
        <recommendedName>
            <fullName>Ubiquitin-conjugating enzyme E2 G1, N-terminally processed</fullName>
        </recommendedName>
    </component>
</protein>
<dbReference type="EC" id="2.3.2.23"/>
<dbReference type="EMBL" id="AB169404">
    <property type="protein sequence ID" value="BAE01487.1"/>
    <property type="molecule type" value="mRNA"/>
</dbReference>
<dbReference type="RefSeq" id="NP_001270329.1">
    <property type="nucleotide sequence ID" value="NM_001283400.1"/>
</dbReference>
<dbReference type="SMR" id="Q4R5Y8"/>
<dbReference type="STRING" id="9541.ENSMFAP00000005086"/>
<dbReference type="eggNOG" id="KOG0425">
    <property type="taxonomic scope" value="Eukaryota"/>
</dbReference>
<dbReference type="UniPathway" id="UPA00143"/>
<dbReference type="Proteomes" id="UP000233100">
    <property type="component" value="Unplaced"/>
</dbReference>
<dbReference type="GO" id="GO:0005524">
    <property type="term" value="F:ATP binding"/>
    <property type="evidence" value="ECO:0007669"/>
    <property type="project" value="UniProtKB-KW"/>
</dbReference>
<dbReference type="GO" id="GO:0061631">
    <property type="term" value="F:ubiquitin conjugating enzyme activity"/>
    <property type="evidence" value="ECO:0007669"/>
    <property type="project" value="UniProtKB-EC"/>
</dbReference>
<dbReference type="GO" id="GO:0004842">
    <property type="term" value="F:ubiquitin-protein transferase activity"/>
    <property type="evidence" value="ECO:0000250"/>
    <property type="project" value="UniProtKB"/>
</dbReference>
<dbReference type="GO" id="GO:0070936">
    <property type="term" value="P:protein K48-linked ubiquitination"/>
    <property type="evidence" value="ECO:0000250"/>
    <property type="project" value="UniProtKB"/>
</dbReference>
<dbReference type="GO" id="GO:0070534">
    <property type="term" value="P:protein K63-linked ubiquitination"/>
    <property type="evidence" value="ECO:0000250"/>
    <property type="project" value="UniProtKB"/>
</dbReference>
<dbReference type="CDD" id="cd23795">
    <property type="entry name" value="UBCc_UBE2G1"/>
    <property type="match status" value="1"/>
</dbReference>
<dbReference type="FunFam" id="3.10.110.10:FF:000018">
    <property type="entry name" value="Ubiquitin-conjugating enzyme E2 G1"/>
    <property type="match status" value="1"/>
</dbReference>
<dbReference type="Gene3D" id="3.10.110.10">
    <property type="entry name" value="Ubiquitin Conjugating Enzyme"/>
    <property type="match status" value="1"/>
</dbReference>
<dbReference type="InterPro" id="IPR050113">
    <property type="entry name" value="Ub_conjugating_enzyme"/>
</dbReference>
<dbReference type="InterPro" id="IPR000608">
    <property type="entry name" value="UBQ-conjugat_E2_core"/>
</dbReference>
<dbReference type="InterPro" id="IPR023313">
    <property type="entry name" value="UBQ-conjugating_AS"/>
</dbReference>
<dbReference type="InterPro" id="IPR016135">
    <property type="entry name" value="UBQ-conjugating_enzyme/RWD"/>
</dbReference>
<dbReference type="PANTHER" id="PTHR24067">
    <property type="entry name" value="UBIQUITIN-CONJUGATING ENZYME E2"/>
    <property type="match status" value="1"/>
</dbReference>
<dbReference type="Pfam" id="PF00179">
    <property type="entry name" value="UQ_con"/>
    <property type="match status" value="1"/>
</dbReference>
<dbReference type="SMART" id="SM00212">
    <property type="entry name" value="UBCc"/>
    <property type="match status" value="1"/>
</dbReference>
<dbReference type="SUPFAM" id="SSF54495">
    <property type="entry name" value="UBC-like"/>
    <property type="match status" value="1"/>
</dbReference>
<dbReference type="PROSITE" id="PS00183">
    <property type="entry name" value="UBC_1"/>
    <property type="match status" value="1"/>
</dbReference>
<dbReference type="PROSITE" id="PS50127">
    <property type="entry name" value="UBC_2"/>
    <property type="match status" value="1"/>
</dbReference>
<sequence>MTELQSALLLRRQLAELNKNPVEGFSAGLIDDNDLYRWEVLIIGPPDTLYEGGVFKAHLTFPKDYPLRPPKMKFITEIWHPNVDKNGDVCISILHEPGEDKYGYEKPEGRWLPIHTVETIMISVISMLADPNGDSPANVDAAKEWREDRNGEFKRKVARCVRKSQETAFE</sequence>
<organism>
    <name type="scientific">Macaca fascicularis</name>
    <name type="common">Crab-eating macaque</name>
    <name type="synonym">Cynomolgus monkey</name>
    <dbReference type="NCBI Taxonomy" id="9541"/>
    <lineage>
        <taxon>Eukaryota</taxon>
        <taxon>Metazoa</taxon>
        <taxon>Chordata</taxon>
        <taxon>Craniata</taxon>
        <taxon>Vertebrata</taxon>
        <taxon>Euteleostomi</taxon>
        <taxon>Mammalia</taxon>
        <taxon>Eutheria</taxon>
        <taxon>Euarchontoglires</taxon>
        <taxon>Primates</taxon>
        <taxon>Haplorrhini</taxon>
        <taxon>Catarrhini</taxon>
        <taxon>Cercopithecidae</taxon>
        <taxon>Cercopithecinae</taxon>
        <taxon>Macaca</taxon>
    </lineage>
</organism>
<evidence type="ECO:0000250" key="1">
    <source>
        <dbReference type="UniProtKB" id="P62253"/>
    </source>
</evidence>
<evidence type="ECO:0000255" key="2">
    <source>
        <dbReference type="PROSITE-ProRule" id="PRU00388"/>
    </source>
</evidence>
<evidence type="ECO:0000255" key="3">
    <source>
        <dbReference type="PROSITE-ProRule" id="PRU10133"/>
    </source>
</evidence>
<keyword id="KW-0007">Acetylation</keyword>
<keyword id="KW-0067">ATP-binding</keyword>
<keyword id="KW-0547">Nucleotide-binding</keyword>
<keyword id="KW-1185">Reference proteome</keyword>
<keyword id="KW-0808">Transferase</keyword>
<keyword id="KW-0832">Ubl conjugation</keyword>
<keyword id="KW-0833">Ubl conjugation pathway</keyword>
<name>UB2G1_MACFA</name>
<comment type="function">
    <text evidence="1">Accepts ubiquitin from the E1 complex and catalyzes its covalent attachment to other proteins. In vitro catalyzes 'Lys-48'-, as well as 'Lys-63'-linked polyubiquitination. May be involved in degradation of muscle-specific proteins. Mediates polyubiquitination of CYP3A4.</text>
</comment>
<comment type="catalytic activity">
    <reaction evidence="1 2 3">
        <text>S-ubiquitinyl-[E1 ubiquitin-activating enzyme]-L-cysteine + [E2 ubiquitin-conjugating enzyme]-L-cysteine = [E1 ubiquitin-activating enzyme]-L-cysteine + S-ubiquitinyl-[E2 ubiquitin-conjugating enzyme]-L-cysteine.</text>
        <dbReference type="EC" id="2.3.2.23"/>
    </reaction>
</comment>
<comment type="pathway">
    <text evidence="2">Protein modification; protein ubiquitination.</text>
</comment>
<comment type="PTM">
    <text evidence="1">Autoubiquitinated.</text>
</comment>
<comment type="similarity">
    <text evidence="2">Belongs to the ubiquitin-conjugating enzyme family.</text>
</comment>
<accession>Q4R5Y8</accession>